<organism>
    <name type="scientific">Chlorobaculum tepidum (strain ATCC 49652 / DSM 12025 / NBRC 103806 / TLS)</name>
    <name type="common">Chlorobium tepidum</name>
    <dbReference type="NCBI Taxonomy" id="194439"/>
    <lineage>
        <taxon>Bacteria</taxon>
        <taxon>Pseudomonadati</taxon>
        <taxon>Chlorobiota</taxon>
        <taxon>Chlorobiia</taxon>
        <taxon>Chlorobiales</taxon>
        <taxon>Chlorobiaceae</taxon>
        <taxon>Chlorobaculum</taxon>
    </lineage>
</organism>
<keyword id="KW-0131">Cell cycle</keyword>
<keyword id="KW-0132">Cell division</keyword>
<keyword id="KW-0997">Cell inner membrane</keyword>
<keyword id="KW-1003">Cell membrane</keyword>
<keyword id="KW-0133">Cell shape</keyword>
<keyword id="KW-0961">Cell wall biogenesis/degradation</keyword>
<keyword id="KW-0460">Magnesium</keyword>
<keyword id="KW-0472">Membrane</keyword>
<keyword id="KW-0479">Metal-binding</keyword>
<keyword id="KW-0573">Peptidoglycan synthesis</keyword>
<keyword id="KW-1185">Reference proteome</keyword>
<keyword id="KW-0808">Transferase</keyword>
<keyword id="KW-0812">Transmembrane</keyword>
<keyword id="KW-1133">Transmembrane helix</keyword>
<comment type="function">
    <text evidence="1">Catalyzes the initial step of the lipid cycle reactions in the biosynthesis of the cell wall peptidoglycan: transfers peptidoglycan precursor phospho-MurNAc-pentapeptide from UDP-MurNAc-pentapeptide onto the lipid carrier undecaprenyl phosphate, yielding undecaprenyl-pyrophosphoryl-MurNAc-pentapeptide, known as lipid I.</text>
</comment>
<comment type="catalytic activity">
    <reaction evidence="1">
        <text>UDP-N-acetyl-alpha-D-muramoyl-L-alanyl-gamma-D-glutamyl-meso-2,6-diaminopimeloyl-D-alanyl-D-alanine + di-trans,octa-cis-undecaprenyl phosphate = di-trans,octa-cis-undecaprenyl diphospho-N-acetyl-alpha-D-muramoyl-L-alanyl-D-glutamyl-meso-2,6-diaminopimeloyl-D-alanyl-D-alanine + UMP</text>
        <dbReference type="Rhea" id="RHEA:28386"/>
        <dbReference type="ChEBI" id="CHEBI:57865"/>
        <dbReference type="ChEBI" id="CHEBI:60392"/>
        <dbReference type="ChEBI" id="CHEBI:61386"/>
        <dbReference type="ChEBI" id="CHEBI:61387"/>
        <dbReference type="EC" id="2.7.8.13"/>
    </reaction>
</comment>
<comment type="cofactor">
    <cofactor evidence="1">
        <name>Mg(2+)</name>
        <dbReference type="ChEBI" id="CHEBI:18420"/>
    </cofactor>
</comment>
<comment type="pathway">
    <text evidence="1">Cell wall biogenesis; peptidoglycan biosynthesis.</text>
</comment>
<comment type="subcellular location">
    <subcellularLocation>
        <location evidence="1">Cell inner membrane</location>
        <topology evidence="1">Multi-pass membrane protein</topology>
    </subcellularLocation>
</comment>
<comment type="similarity">
    <text evidence="1">Belongs to the glycosyltransferase 4 family. MraY subfamily.</text>
</comment>
<dbReference type="EC" id="2.7.8.13" evidence="1"/>
<dbReference type="EMBL" id="AE006470">
    <property type="protein sequence ID" value="AAM71285.1"/>
    <property type="molecule type" value="Genomic_DNA"/>
</dbReference>
<dbReference type="RefSeq" id="NP_660943.1">
    <property type="nucleotide sequence ID" value="NC_002932.3"/>
</dbReference>
<dbReference type="RefSeq" id="WP_010931731.1">
    <property type="nucleotide sequence ID" value="NC_002932.3"/>
</dbReference>
<dbReference type="SMR" id="Q8KGD1"/>
<dbReference type="STRING" id="194439.CT0037"/>
<dbReference type="EnsemblBacteria" id="AAM71285">
    <property type="protein sequence ID" value="AAM71285"/>
    <property type="gene ID" value="CT0037"/>
</dbReference>
<dbReference type="KEGG" id="cte:CT0037"/>
<dbReference type="PATRIC" id="fig|194439.7.peg.36"/>
<dbReference type="eggNOG" id="COG0472">
    <property type="taxonomic scope" value="Bacteria"/>
</dbReference>
<dbReference type="HOGENOM" id="CLU_023982_0_0_10"/>
<dbReference type="OrthoDB" id="9805475at2"/>
<dbReference type="UniPathway" id="UPA00219"/>
<dbReference type="Proteomes" id="UP000001007">
    <property type="component" value="Chromosome"/>
</dbReference>
<dbReference type="GO" id="GO:0005886">
    <property type="term" value="C:plasma membrane"/>
    <property type="evidence" value="ECO:0007669"/>
    <property type="project" value="UniProtKB-SubCell"/>
</dbReference>
<dbReference type="GO" id="GO:0046872">
    <property type="term" value="F:metal ion binding"/>
    <property type="evidence" value="ECO:0007669"/>
    <property type="project" value="UniProtKB-KW"/>
</dbReference>
<dbReference type="GO" id="GO:0008963">
    <property type="term" value="F:phospho-N-acetylmuramoyl-pentapeptide-transferase activity"/>
    <property type="evidence" value="ECO:0007669"/>
    <property type="project" value="UniProtKB-UniRule"/>
</dbReference>
<dbReference type="GO" id="GO:0051992">
    <property type="term" value="F:UDP-N-acetylmuramoyl-L-alanyl-D-glutamyl-meso-2,6-diaminopimelyl-D-alanyl-D-alanine:undecaprenyl-phosphate transferase activity"/>
    <property type="evidence" value="ECO:0007669"/>
    <property type="project" value="RHEA"/>
</dbReference>
<dbReference type="GO" id="GO:0051301">
    <property type="term" value="P:cell division"/>
    <property type="evidence" value="ECO:0007669"/>
    <property type="project" value="UniProtKB-KW"/>
</dbReference>
<dbReference type="GO" id="GO:0071555">
    <property type="term" value="P:cell wall organization"/>
    <property type="evidence" value="ECO:0007669"/>
    <property type="project" value="UniProtKB-KW"/>
</dbReference>
<dbReference type="GO" id="GO:0009252">
    <property type="term" value="P:peptidoglycan biosynthetic process"/>
    <property type="evidence" value="ECO:0007669"/>
    <property type="project" value="UniProtKB-UniRule"/>
</dbReference>
<dbReference type="GO" id="GO:0008360">
    <property type="term" value="P:regulation of cell shape"/>
    <property type="evidence" value="ECO:0007669"/>
    <property type="project" value="UniProtKB-KW"/>
</dbReference>
<dbReference type="CDD" id="cd06852">
    <property type="entry name" value="GT_MraY"/>
    <property type="match status" value="1"/>
</dbReference>
<dbReference type="HAMAP" id="MF_00038">
    <property type="entry name" value="MraY"/>
    <property type="match status" value="1"/>
</dbReference>
<dbReference type="InterPro" id="IPR000715">
    <property type="entry name" value="Glycosyl_transferase_4"/>
</dbReference>
<dbReference type="InterPro" id="IPR003524">
    <property type="entry name" value="PNAcMuramoyl-5peptid_Trfase"/>
</dbReference>
<dbReference type="InterPro" id="IPR018480">
    <property type="entry name" value="PNAcMuramoyl-5peptid_Trfase_CS"/>
</dbReference>
<dbReference type="NCBIfam" id="TIGR00445">
    <property type="entry name" value="mraY"/>
    <property type="match status" value="1"/>
</dbReference>
<dbReference type="PANTHER" id="PTHR22926">
    <property type="entry name" value="PHOSPHO-N-ACETYLMURAMOYL-PENTAPEPTIDE-TRANSFERASE"/>
    <property type="match status" value="1"/>
</dbReference>
<dbReference type="PANTHER" id="PTHR22926:SF5">
    <property type="entry name" value="PHOSPHO-N-ACETYLMURAMOYL-PENTAPEPTIDE-TRANSFERASE HOMOLOG"/>
    <property type="match status" value="1"/>
</dbReference>
<dbReference type="Pfam" id="PF00953">
    <property type="entry name" value="Glycos_transf_4"/>
    <property type="match status" value="1"/>
</dbReference>
<dbReference type="PROSITE" id="PS01347">
    <property type="entry name" value="MRAY_1"/>
    <property type="match status" value="1"/>
</dbReference>
<dbReference type="PROSITE" id="PS01348">
    <property type="entry name" value="MRAY_2"/>
    <property type="match status" value="1"/>
</dbReference>
<name>MRAY_CHLTE</name>
<evidence type="ECO:0000255" key="1">
    <source>
        <dbReference type="HAMAP-Rule" id="MF_00038"/>
    </source>
</evidence>
<sequence>MLYYILRYINELYSLPGMGVIEYLTFRASAAAITALLIIIFAGQRFIRFLKSKFVEPIKEEAPPEHRKKKDVPTMGGLMIIFAIEVSAFLWAKIDDPHVWLIMLAVFWMGLIGFIDDYQKVVLKVKGGLAGHYKLIGQVTLGLVIGFYTWNDPVFSVLLSDTTVPFFKKLSVDYGIFYIPVVIFIITAVSNAVNLTDGLDGLAAGNAAIVTFALGVFAYLCGNAVYSGYLSIPFISGAGEVAVVSMAIVMACVGFLWFNSSPAEVFMGDTGSLSLGSAIAVIALMIKQELLLPVLAGVFFVETLSVSMQVAWFKISKKLYGEGRRIFLMAPLHHHFQLKGWAEQKIVIRFWIISILLFLTSLMTLKLR</sequence>
<proteinExistence type="inferred from homology"/>
<accession>Q8KGD1</accession>
<gene>
    <name evidence="1" type="primary">mraY</name>
    <name type="ordered locus">CT0037</name>
</gene>
<reference key="1">
    <citation type="journal article" date="2002" name="Proc. Natl. Acad. Sci. U.S.A.">
        <title>The complete genome sequence of Chlorobium tepidum TLS, a photosynthetic, anaerobic, green-sulfur bacterium.</title>
        <authorList>
            <person name="Eisen J.A."/>
            <person name="Nelson K.E."/>
            <person name="Paulsen I.T."/>
            <person name="Heidelberg J.F."/>
            <person name="Wu M."/>
            <person name="Dodson R.J."/>
            <person name="DeBoy R.T."/>
            <person name="Gwinn M.L."/>
            <person name="Nelson W.C."/>
            <person name="Haft D.H."/>
            <person name="Hickey E.K."/>
            <person name="Peterson J.D."/>
            <person name="Durkin A.S."/>
            <person name="Kolonay J.F."/>
            <person name="Yang F."/>
            <person name="Holt I.E."/>
            <person name="Umayam L.A."/>
            <person name="Mason T.M."/>
            <person name="Brenner M."/>
            <person name="Shea T.P."/>
            <person name="Parksey D.S."/>
            <person name="Nierman W.C."/>
            <person name="Feldblyum T.V."/>
            <person name="Hansen C.L."/>
            <person name="Craven M.B."/>
            <person name="Radune D."/>
            <person name="Vamathevan J.J."/>
            <person name="Khouri H.M."/>
            <person name="White O."/>
            <person name="Gruber T.M."/>
            <person name="Ketchum K.A."/>
            <person name="Venter J.C."/>
            <person name="Tettelin H."/>
            <person name="Bryant D.A."/>
            <person name="Fraser C.M."/>
        </authorList>
    </citation>
    <scope>NUCLEOTIDE SEQUENCE [LARGE SCALE GENOMIC DNA]</scope>
    <source>
        <strain>ATCC 49652 / DSM 12025 / NBRC 103806 / TLS</strain>
    </source>
</reference>
<feature type="chain" id="PRO_0000108807" description="Phospho-N-acetylmuramoyl-pentapeptide-transferase">
    <location>
        <begin position="1"/>
        <end position="368"/>
    </location>
</feature>
<feature type="transmembrane region" description="Helical" evidence="1">
    <location>
        <begin position="23"/>
        <end position="43"/>
    </location>
</feature>
<feature type="transmembrane region" description="Helical" evidence="1">
    <location>
        <begin position="72"/>
        <end position="92"/>
    </location>
</feature>
<feature type="transmembrane region" description="Helical" evidence="1">
    <location>
        <begin position="98"/>
        <end position="118"/>
    </location>
</feature>
<feature type="transmembrane region" description="Helical" evidence="1">
    <location>
        <begin position="139"/>
        <end position="159"/>
    </location>
</feature>
<feature type="transmembrane region" description="Helical" evidence="1">
    <location>
        <begin position="170"/>
        <end position="190"/>
    </location>
</feature>
<feature type="transmembrane region" description="Helical" evidence="1">
    <location>
        <begin position="201"/>
        <end position="221"/>
    </location>
</feature>
<feature type="transmembrane region" description="Helical" evidence="1">
    <location>
        <begin position="238"/>
        <end position="258"/>
    </location>
</feature>
<feature type="transmembrane region" description="Helical" evidence="1">
    <location>
        <begin position="281"/>
        <end position="301"/>
    </location>
</feature>
<feature type="transmembrane region" description="Helical" evidence="1">
    <location>
        <begin position="345"/>
        <end position="365"/>
    </location>
</feature>
<protein>
    <recommendedName>
        <fullName evidence="1">Phospho-N-acetylmuramoyl-pentapeptide-transferase</fullName>
        <ecNumber evidence="1">2.7.8.13</ecNumber>
    </recommendedName>
    <alternativeName>
        <fullName evidence="1">UDP-MurNAc-pentapeptide phosphotransferase</fullName>
    </alternativeName>
</protein>